<protein>
    <recommendedName>
        <fullName evidence="6">Microsomal triglyceride transfer protein homolog</fullName>
    </recommendedName>
    <alternativeName>
        <fullName evidence="10">Defecation suppressor of clk-1</fullName>
    </alternativeName>
</protein>
<reference evidence="8" key="1">
    <citation type="journal article" date="2003" name="Science">
        <title>Redox regulation of germline and vulval development in Caenorhabditis elegans.</title>
        <authorList>
            <person name="Shibata Y."/>
            <person name="Branicky R."/>
            <person name="Landaverde I.O."/>
            <person name="Hekimi S."/>
        </authorList>
    </citation>
    <scope>NUCLEOTIDE SEQUENCE [MRNA]</scope>
    <scope>FUNCTION</scope>
    <scope>DISRUPTION PHENOTYPE</scope>
    <scope>MUTAGENESIS OF SER-62 AND ALA-146</scope>
</reference>
<reference evidence="9" key="2">
    <citation type="journal article" date="1998" name="Science">
        <title>Genome sequence of the nematode C. elegans: a platform for investigating biology.</title>
        <authorList>
            <consortium name="The C. elegans sequencing consortium"/>
        </authorList>
    </citation>
    <scope>NUCLEOTIDE SEQUENCE [LARGE SCALE GENOMIC DNA]</scope>
    <source>
        <strain evidence="9">Bristol N2</strain>
    </source>
</reference>
<reference evidence="7" key="3">
    <citation type="journal article" date="2007" name="Biochemistry">
        <title>Acquisition of triacylglycerol transfer activity by microsomal triglyceride transfer protein during evolution.</title>
        <authorList>
            <person name="Rava P."/>
            <person name="Hussain M.M."/>
        </authorList>
    </citation>
    <scope>FUNCTION</scope>
    <scope>SUBUNIT</scope>
    <scope>SUBCELLULAR LOCATION</scope>
</reference>
<reference evidence="7" key="4">
    <citation type="journal article" date="2013" name="J. Mol. Biol.">
        <title>Regulation of lipoprotein assembly, secretion and fatty acid beta-oxidation by Krueppel-like transcription factor, klf-3.</title>
        <authorList>
            <person name="Zhang J."/>
            <person name="Hashmi S."/>
            <person name="Cheema F."/>
            <person name="Al-Nasser N."/>
            <person name="Bakheet R."/>
            <person name="Parhar R.S."/>
            <person name="Al-Mohanna F."/>
            <person name="Gaugler R."/>
            <person name="Hussain M.M."/>
            <person name="Hashmi S."/>
        </authorList>
    </citation>
    <scope>FUNCTION</scope>
    <scope>DEVELOPMENTAL STAGE</scope>
    <scope>MUTAGENESIS OF SER-62 AND ALA-146</scope>
</reference>
<comment type="function">
    <text evidence="1 3 4 5">Catalyzes the transport of cholesteryl ester, and phospholipid between phospholipid surfaces (By similarity). Does not catalyze transport of triglycerides (PubMed:17924655). Required for the assembly and secretion of plasma lipoproteins that contain apolipoprotein B (PubMed:14657502, PubMed:17924655). Required for normal expression of klf-3 (PubMed:23639358).</text>
</comment>
<comment type="subunit">
    <text evidence="4">Heterodimer; heterodimerizes with protein disulfide isomerase.</text>
</comment>
<comment type="subcellular location">
    <subcellularLocation>
        <location evidence="4">Endoplasmic reticulum</location>
    </subcellularLocation>
</comment>
<comment type="developmental stage">
    <text evidence="5">Expressed in the intestine throughout larval stages and adulthood.</text>
</comment>
<comment type="disruption phenotype">
    <text evidence="3">RNAi-mediated knockdown suppresses the slow germline development and the delayed egg-production of clk-1 mutants, but does not affect the rate of postembryonic development.</text>
</comment>
<keyword id="KW-0256">Endoplasmic reticulum</keyword>
<keyword id="KW-0445">Lipid transport</keyword>
<keyword id="KW-0446">Lipid-binding</keyword>
<keyword id="KW-1185">Reference proteome</keyword>
<keyword id="KW-0732">Signal</keyword>
<keyword id="KW-0813">Transport</keyword>
<proteinExistence type="evidence at protein level"/>
<sequence length="892" mass="101017">MFSSRIWLLLAVTVGVCLAVPDLDEIKKNLRKHGPDYYKNQPKMNENTVRLLKVDYWFRTESMIYDDIDNKEKDPSTVIAGNFSFETLHHDVEGGMLGRFTLTQCNTDNCGNPSPIYIAFRQGGNNAEHILKASDESDATWNFLYAIVNTIYTPAEYGEGDEQTVDTIYGRCFVNFGRPEDKRFRRIIEKCDLGYGTNFTKFEGIESVQYDQDVWYTQNTKVDADIIMVDAIEMLAFKSPLHEKYGFTLESRTHVEITNRTRVFVTSYCNDTVPSAKCAEQAFGAVRVGGKLYEHVKIAQEQSNKLTKLIGTYRRHLQDMGDSHICEKHSLLYSQIAQEARLAKRQDWEAAIQYPENDHVLSLIASALGGVGTAESITTAREVLLTASPDYLDDLLFGISQSSSNNEKWHKQLMYWLGSLDKKSEEYWKVANTIATVLNKRCEASTSSLNSCNKGKETIVNKFITDLTAGGVEVRVLEVLENIPIFGSYTFAKKFICETESEDVQKAALNVILAASKNLYETQLTHKLIKLFRNTCSQETPTSHSQLAIDILLKCVPDHQNVATLILRTETLNPDDQEKWHYLYKAIEASGNKDELKAEFWSRMRKFKVFRPNFLHRALQADSHVHWQEIADASNFQLFSTANTEFLQKSFKRSIFELSMKKGRKEHNLFSLSIDTEHLEQFVTGSASSRSGAPQGSVRIGVAGHKLPTHHIFKGSTDLLSTVWEADGRTHKAFEGHVPVRDVRLSVPLLSGLTLDVDSVGAISMRVLASAEVSLWNQRSNAKAEAYTSGSLHLTASLYHHSEPVRHVESTISALSTFTTDTRAIFETLPYDFCLRTSNSNVDINQKTVVQDQIGKHKKKTLNRKRVHPGVTYRLDDSTIRQCNSYLEQFRL</sequence>
<name>MTP_CAEEL</name>
<feature type="signal peptide" evidence="2">
    <location>
        <begin position="1"/>
        <end position="19"/>
    </location>
</feature>
<feature type="chain" id="PRO_5015091924" description="Microsomal triglyceride transfer protein homolog" evidence="2">
    <location>
        <begin position="20"/>
        <end position="892"/>
    </location>
</feature>
<feature type="mutagenesis site" description="In qm182; lipid contents in the intestine increases by 40%, and by 80% on a klf-3 mutant background. Suppresses the delayed germline development and egg-laying on a clk-1 mutant background, but does not affect the rate of postembryonic development; when associated with T-146." evidence="3 5">
    <original>S</original>
    <variation>F</variation>
    <location>
        <position position="62"/>
    </location>
</feature>
<feature type="mutagenesis site" description="In qm182; lipid contents in the intestine increases by 40%, and by 80% on a klf-3 mutant background. Suppresses the delayed germline development and egg-laying on a clk-1 mutant background, but does not affect the rate of postembryonic development; when associated with F-62." evidence="3 5">
    <original>A</original>
    <variation>T</variation>
    <location>
        <position position="146"/>
    </location>
</feature>
<dbReference type="EMBL" id="AY428645">
    <property type="protein sequence ID" value="AAR27937.1"/>
    <property type="molecule type" value="mRNA"/>
</dbReference>
<dbReference type="EMBL" id="BX284604">
    <property type="protein sequence ID" value="CCD69687.1"/>
    <property type="molecule type" value="Genomic_DNA"/>
</dbReference>
<dbReference type="PIR" id="T32984">
    <property type="entry name" value="T32984"/>
</dbReference>
<dbReference type="RefSeq" id="NP_499903.3">
    <property type="nucleotide sequence ID" value="NM_067502.5"/>
</dbReference>
<dbReference type="SMR" id="G5ECG7"/>
<dbReference type="FunCoup" id="G5ECG7">
    <property type="interactions" value="12"/>
</dbReference>
<dbReference type="STRING" id="6239.K02D7.4.1"/>
<dbReference type="PaxDb" id="6239-K02D7.4"/>
<dbReference type="PeptideAtlas" id="G5ECG7"/>
<dbReference type="EnsemblMetazoa" id="K02D7.4.1">
    <property type="protein sequence ID" value="K02D7.4.1"/>
    <property type="gene ID" value="WBGene00001099"/>
</dbReference>
<dbReference type="GeneID" id="176852"/>
<dbReference type="KEGG" id="cel:CELE_K02D7.4"/>
<dbReference type="AGR" id="WB:WBGene00001099"/>
<dbReference type="CTD" id="176852"/>
<dbReference type="WormBase" id="K02D7.4">
    <property type="protein sequence ID" value="CE33667"/>
    <property type="gene ID" value="WBGene00001099"/>
    <property type="gene designation" value="dsc-4"/>
</dbReference>
<dbReference type="eggNOG" id="KOG4337">
    <property type="taxonomic scope" value="Eukaryota"/>
</dbReference>
<dbReference type="GeneTree" id="ENSGT00390000011412"/>
<dbReference type="HOGENOM" id="CLU_323959_0_0_1"/>
<dbReference type="InParanoid" id="G5ECG7"/>
<dbReference type="OMA" id="HVWGGSA"/>
<dbReference type="OrthoDB" id="5865932at2759"/>
<dbReference type="PhylomeDB" id="G5ECG7"/>
<dbReference type="Reactome" id="R-CEL-8964041">
    <property type="pathway name" value="LDL remodeling"/>
</dbReference>
<dbReference type="PRO" id="PR:G5ECG7"/>
<dbReference type="Proteomes" id="UP000001940">
    <property type="component" value="Chromosome IV"/>
</dbReference>
<dbReference type="Bgee" id="WBGene00001099">
    <property type="expression patterns" value="Expressed in larva and 3 other cell types or tissues"/>
</dbReference>
<dbReference type="GO" id="GO:0016323">
    <property type="term" value="C:basolateral plasma membrane"/>
    <property type="evidence" value="ECO:0000318"/>
    <property type="project" value="GO_Central"/>
</dbReference>
<dbReference type="GO" id="GO:0005783">
    <property type="term" value="C:endoplasmic reticulum"/>
    <property type="evidence" value="ECO:0000314"/>
    <property type="project" value="UniProtKB"/>
</dbReference>
<dbReference type="GO" id="GO:0005794">
    <property type="term" value="C:Golgi apparatus"/>
    <property type="evidence" value="ECO:0000318"/>
    <property type="project" value="GO_Central"/>
</dbReference>
<dbReference type="GO" id="GO:0008289">
    <property type="term" value="F:lipid binding"/>
    <property type="evidence" value="ECO:0007669"/>
    <property type="project" value="UniProtKB-KW"/>
</dbReference>
<dbReference type="GO" id="GO:0120013">
    <property type="term" value="F:lipid transfer activity"/>
    <property type="evidence" value="ECO:0000250"/>
    <property type="project" value="WormBase"/>
</dbReference>
<dbReference type="GO" id="GO:0005548">
    <property type="term" value="F:phospholipid transporter activity"/>
    <property type="evidence" value="ECO:0000318"/>
    <property type="project" value="GO_Central"/>
</dbReference>
<dbReference type="GO" id="GO:0030968">
    <property type="term" value="P:endoplasmic reticulum unfolded protein response"/>
    <property type="evidence" value="ECO:0007007"/>
    <property type="project" value="WormBase"/>
</dbReference>
<dbReference type="GO" id="GO:0036498">
    <property type="term" value="P:IRE1-mediated unfolded protein response"/>
    <property type="evidence" value="ECO:0007007"/>
    <property type="project" value="WormBase"/>
</dbReference>
<dbReference type="GO" id="GO:0042157">
    <property type="term" value="P:lipoprotein metabolic process"/>
    <property type="evidence" value="ECO:0000318"/>
    <property type="project" value="GO_Central"/>
</dbReference>
<dbReference type="GO" id="GO:0042953">
    <property type="term" value="P:lipoprotein transport"/>
    <property type="evidence" value="ECO:0000314"/>
    <property type="project" value="UniProtKB"/>
</dbReference>
<dbReference type="GO" id="GO:0034377">
    <property type="term" value="P:plasma lipoprotein particle assembly"/>
    <property type="evidence" value="ECO:0000314"/>
    <property type="project" value="UniProtKB"/>
</dbReference>
<dbReference type="InterPro" id="IPR045811">
    <property type="entry name" value="MTP_lip-bd"/>
</dbReference>
<dbReference type="InterPro" id="IPR039988">
    <property type="entry name" value="MTTP"/>
</dbReference>
<dbReference type="PANTHER" id="PTHR13024:SF0">
    <property type="entry name" value="MICROSOMAL TRIACYLGLYCEROL TRANSFER PROTEIN"/>
    <property type="match status" value="1"/>
</dbReference>
<dbReference type="PANTHER" id="PTHR13024">
    <property type="entry name" value="MICROSOMAL TRIGLYCERIDE TRANSFER PROTEIN, LARGE SUBUNIT"/>
    <property type="match status" value="1"/>
</dbReference>
<dbReference type="Pfam" id="PF19444">
    <property type="entry name" value="MTP_lip_bd"/>
    <property type="match status" value="1"/>
</dbReference>
<gene>
    <name evidence="10" type="primary">dsc-4</name>
    <name evidence="10" type="ORF">K02D7.4</name>
</gene>
<organism evidence="9">
    <name type="scientific">Caenorhabditis elegans</name>
    <dbReference type="NCBI Taxonomy" id="6239"/>
    <lineage>
        <taxon>Eukaryota</taxon>
        <taxon>Metazoa</taxon>
        <taxon>Ecdysozoa</taxon>
        <taxon>Nematoda</taxon>
        <taxon>Chromadorea</taxon>
        <taxon>Rhabditida</taxon>
        <taxon>Rhabditina</taxon>
        <taxon>Rhabditomorpha</taxon>
        <taxon>Rhabditoidea</taxon>
        <taxon>Rhabditidae</taxon>
        <taxon>Peloderinae</taxon>
        <taxon>Caenorhabditis</taxon>
    </lineage>
</organism>
<evidence type="ECO:0000250" key="1">
    <source>
        <dbReference type="UniProtKB" id="P55157"/>
    </source>
</evidence>
<evidence type="ECO:0000255" key="2"/>
<evidence type="ECO:0000269" key="3">
    <source>
    </source>
</evidence>
<evidence type="ECO:0000269" key="4">
    <source>
    </source>
</evidence>
<evidence type="ECO:0000269" key="5">
    <source>
    </source>
</evidence>
<evidence type="ECO:0000303" key="6">
    <source>
    </source>
</evidence>
<evidence type="ECO:0000305" key="7"/>
<evidence type="ECO:0000312" key="8">
    <source>
        <dbReference type="EMBL" id="AAR27937.1"/>
    </source>
</evidence>
<evidence type="ECO:0000312" key="9">
    <source>
        <dbReference type="Proteomes" id="UP000001940"/>
    </source>
</evidence>
<evidence type="ECO:0000312" key="10">
    <source>
        <dbReference type="WormBase" id="K02D7.4"/>
    </source>
</evidence>
<accession>G5ECG7</accession>